<name>RS4_STAAS</name>
<evidence type="ECO:0000255" key="1">
    <source>
        <dbReference type="HAMAP-Rule" id="MF_01306"/>
    </source>
</evidence>
<evidence type="ECO:0000305" key="2"/>
<reference key="1">
    <citation type="journal article" date="2004" name="Proc. Natl. Acad. Sci. U.S.A.">
        <title>Complete genomes of two clinical Staphylococcus aureus strains: evidence for the rapid evolution of virulence and drug resistance.</title>
        <authorList>
            <person name="Holden M.T.G."/>
            <person name="Feil E.J."/>
            <person name="Lindsay J.A."/>
            <person name="Peacock S.J."/>
            <person name="Day N.P.J."/>
            <person name="Enright M.C."/>
            <person name="Foster T.J."/>
            <person name="Moore C.E."/>
            <person name="Hurst L."/>
            <person name="Atkin R."/>
            <person name="Barron A."/>
            <person name="Bason N."/>
            <person name="Bentley S.D."/>
            <person name="Chillingworth C."/>
            <person name="Chillingworth T."/>
            <person name="Churcher C."/>
            <person name="Clark L."/>
            <person name="Corton C."/>
            <person name="Cronin A."/>
            <person name="Doggett J."/>
            <person name="Dowd L."/>
            <person name="Feltwell T."/>
            <person name="Hance Z."/>
            <person name="Harris B."/>
            <person name="Hauser H."/>
            <person name="Holroyd S."/>
            <person name="Jagels K."/>
            <person name="James K.D."/>
            <person name="Lennard N."/>
            <person name="Line A."/>
            <person name="Mayes R."/>
            <person name="Moule S."/>
            <person name="Mungall K."/>
            <person name="Ormond D."/>
            <person name="Quail M.A."/>
            <person name="Rabbinowitsch E."/>
            <person name="Rutherford K.M."/>
            <person name="Sanders M."/>
            <person name="Sharp S."/>
            <person name="Simmonds M."/>
            <person name="Stevens K."/>
            <person name="Whitehead S."/>
            <person name="Barrell B.G."/>
            <person name="Spratt B.G."/>
            <person name="Parkhill J."/>
        </authorList>
    </citation>
    <scope>NUCLEOTIDE SEQUENCE [LARGE SCALE GENOMIC DNA]</scope>
    <source>
        <strain>MSSA476</strain>
    </source>
</reference>
<comment type="function">
    <text evidence="1">One of the primary rRNA binding proteins, it binds directly to 16S rRNA where it nucleates assembly of the body of the 30S subunit.</text>
</comment>
<comment type="function">
    <text evidence="1">With S5 and S12 plays an important role in translational accuracy.</text>
</comment>
<comment type="subunit">
    <text evidence="1">Part of the 30S ribosomal subunit. Contacts protein S5. The interaction surface between S4 and S5 is involved in control of translational fidelity.</text>
</comment>
<comment type="similarity">
    <text evidence="1">Belongs to the universal ribosomal protein uS4 family.</text>
</comment>
<dbReference type="EMBL" id="BX571857">
    <property type="protein sequence ID" value="CAG43448.1"/>
    <property type="molecule type" value="Genomic_DNA"/>
</dbReference>
<dbReference type="RefSeq" id="WP_000090512.1">
    <property type="nucleotide sequence ID" value="NC_002953.3"/>
</dbReference>
<dbReference type="SMR" id="Q6G8K8"/>
<dbReference type="KEGG" id="sas:SAS1646"/>
<dbReference type="HOGENOM" id="CLU_092403_0_1_9"/>
<dbReference type="GO" id="GO:0015935">
    <property type="term" value="C:small ribosomal subunit"/>
    <property type="evidence" value="ECO:0007669"/>
    <property type="project" value="InterPro"/>
</dbReference>
<dbReference type="GO" id="GO:0019843">
    <property type="term" value="F:rRNA binding"/>
    <property type="evidence" value="ECO:0007669"/>
    <property type="project" value="UniProtKB-UniRule"/>
</dbReference>
<dbReference type="GO" id="GO:0003735">
    <property type="term" value="F:structural constituent of ribosome"/>
    <property type="evidence" value="ECO:0007669"/>
    <property type="project" value="InterPro"/>
</dbReference>
<dbReference type="GO" id="GO:0042274">
    <property type="term" value="P:ribosomal small subunit biogenesis"/>
    <property type="evidence" value="ECO:0007669"/>
    <property type="project" value="TreeGrafter"/>
</dbReference>
<dbReference type="GO" id="GO:0006412">
    <property type="term" value="P:translation"/>
    <property type="evidence" value="ECO:0007669"/>
    <property type="project" value="UniProtKB-UniRule"/>
</dbReference>
<dbReference type="CDD" id="cd00165">
    <property type="entry name" value="S4"/>
    <property type="match status" value="1"/>
</dbReference>
<dbReference type="FunFam" id="1.10.1050.10:FF:000001">
    <property type="entry name" value="30S ribosomal protein S4"/>
    <property type="match status" value="1"/>
</dbReference>
<dbReference type="FunFam" id="3.10.290.10:FF:000001">
    <property type="entry name" value="30S ribosomal protein S4"/>
    <property type="match status" value="1"/>
</dbReference>
<dbReference type="Gene3D" id="1.10.1050.10">
    <property type="entry name" value="Ribosomal Protein S4 Delta 41, Chain A, domain 1"/>
    <property type="match status" value="1"/>
</dbReference>
<dbReference type="Gene3D" id="3.10.290.10">
    <property type="entry name" value="RNA-binding S4 domain"/>
    <property type="match status" value="1"/>
</dbReference>
<dbReference type="HAMAP" id="MF_01306_B">
    <property type="entry name" value="Ribosomal_uS4_B"/>
    <property type="match status" value="1"/>
</dbReference>
<dbReference type="InterPro" id="IPR022801">
    <property type="entry name" value="Ribosomal_uS4"/>
</dbReference>
<dbReference type="InterPro" id="IPR005709">
    <property type="entry name" value="Ribosomal_uS4_bac-type"/>
</dbReference>
<dbReference type="InterPro" id="IPR018079">
    <property type="entry name" value="Ribosomal_uS4_CS"/>
</dbReference>
<dbReference type="InterPro" id="IPR001912">
    <property type="entry name" value="Ribosomal_uS4_N"/>
</dbReference>
<dbReference type="InterPro" id="IPR002942">
    <property type="entry name" value="S4_RNA-bd"/>
</dbReference>
<dbReference type="InterPro" id="IPR036986">
    <property type="entry name" value="S4_RNA-bd_sf"/>
</dbReference>
<dbReference type="NCBIfam" id="NF003717">
    <property type="entry name" value="PRK05327.1"/>
    <property type="match status" value="1"/>
</dbReference>
<dbReference type="NCBIfam" id="TIGR01017">
    <property type="entry name" value="rpsD_bact"/>
    <property type="match status" value="1"/>
</dbReference>
<dbReference type="PANTHER" id="PTHR11831">
    <property type="entry name" value="30S 40S RIBOSOMAL PROTEIN"/>
    <property type="match status" value="1"/>
</dbReference>
<dbReference type="PANTHER" id="PTHR11831:SF4">
    <property type="entry name" value="SMALL RIBOSOMAL SUBUNIT PROTEIN US4M"/>
    <property type="match status" value="1"/>
</dbReference>
<dbReference type="Pfam" id="PF00163">
    <property type="entry name" value="Ribosomal_S4"/>
    <property type="match status" value="1"/>
</dbReference>
<dbReference type="Pfam" id="PF01479">
    <property type="entry name" value="S4"/>
    <property type="match status" value="1"/>
</dbReference>
<dbReference type="SMART" id="SM01390">
    <property type="entry name" value="Ribosomal_S4"/>
    <property type="match status" value="1"/>
</dbReference>
<dbReference type="SMART" id="SM00363">
    <property type="entry name" value="S4"/>
    <property type="match status" value="1"/>
</dbReference>
<dbReference type="SUPFAM" id="SSF55174">
    <property type="entry name" value="Alpha-L RNA-binding motif"/>
    <property type="match status" value="1"/>
</dbReference>
<dbReference type="PROSITE" id="PS00632">
    <property type="entry name" value="RIBOSOMAL_S4"/>
    <property type="match status" value="1"/>
</dbReference>
<dbReference type="PROSITE" id="PS50889">
    <property type="entry name" value="S4"/>
    <property type="match status" value="1"/>
</dbReference>
<feature type="chain" id="PRO_0000132460" description="Small ribosomal subunit protein uS4">
    <location>
        <begin position="1"/>
        <end position="200"/>
    </location>
</feature>
<feature type="domain" description="S4 RNA-binding" evidence="1">
    <location>
        <begin position="92"/>
        <end position="155"/>
    </location>
</feature>
<protein>
    <recommendedName>
        <fullName evidence="1">Small ribosomal subunit protein uS4</fullName>
    </recommendedName>
    <alternativeName>
        <fullName evidence="2">30S ribosomal protein S4</fullName>
    </alternativeName>
</protein>
<accession>Q6G8K8</accession>
<sequence>MARFRGSNWKKSRRLGISLSGTGKELEKRPYAPGQHGPNQRKKLSEYGLQLREKQKLRYLYGMTERQFRNTFDIAGKKFGVHGENFMILLASRLDAVVYSLGLARTRRQARQLVNHGHILVDGKRVDIPSYSVKPGQTISVREKSQKLNIIVESVEINNFVPEYLNFDADSLTGTFVRLPERSELPAEINEQLIVEYYSR</sequence>
<proteinExistence type="inferred from homology"/>
<organism>
    <name type="scientific">Staphylococcus aureus (strain MSSA476)</name>
    <dbReference type="NCBI Taxonomy" id="282459"/>
    <lineage>
        <taxon>Bacteria</taxon>
        <taxon>Bacillati</taxon>
        <taxon>Bacillota</taxon>
        <taxon>Bacilli</taxon>
        <taxon>Bacillales</taxon>
        <taxon>Staphylococcaceae</taxon>
        <taxon>Staphylococcus</taxon>
    </lineage>
</organism>
<gene>
    <name evidence="1" type="primary">rpsD</name>
    <name type="ordered locus">SAS1646</name>
</gene>
<keyword id="KW-0687">Ribonucleoprotein</keyword>
<keyword id="KW-0689">Ribosomal protein</keyword>
<keyword id="KW-0694">RNA-binding</keyword>
<keyword id="KW-0699">rRNA-binding</keyword>